<evidence type="ECO:0000250" key="1"/>
<evidence type="ECO:0000255" key="2"/>
<evidence type="ECO:0000269" key="3">
    <source>
    </source>
</evidence>
<evidence type="ECO:0000305" key="4"/>
<accession>B9GBJ9</accession>
<accession>Q0IQI6</accession>
<accession>Q2QYH8</accession>
<feature type="chain" id="PRO_0000422415" description="Cytochrome P450 714C1">
    <location>
        <begin position="1"/>
        <end position="503"/>
    </location>
</feature>
<feature type="topological domain" description="Lumenal" evidence="2">
    <location>
        <begin position="1"/>
        <end position="6"/>
    </location>
</feature>
<feature type="transmembrane region" description="Helical; Signal-anchor for type III membrane protein" evidence="2">
    <location>
        <begin position="7"/>
        <end position="27"/>
    </location>
</feature>
<feature type="topological domain" description="Cytoplasmic" evidence="2">
    <location>
        <begin position="28"/>
        <end position="503"/>
    </location>
</feature>
<feature type="binding site" description="axial binding residue" evidence="1">
    <location>
        <position position="450"/>
    </location>
    <ligand>
        <name>heme</name>
        <dbReference type="ChEBI" id="CHEBI:30413"/>
    </ligand>
    <ligandPart>
        <name>Fe</name>
        <dbReference type="ChEBI" id="CHEBI:18248"/>
    </ligandPart>
</feature>
<protein>
    <recommendedName>
        <fullName>Cytochrome P450 714C1</fullName>
        <ecNumber>1.14.-.-</ecNumber>
    </recommendedName>
</protein>
<keyword id="KW-0349">Heme</keyword>
<keyword id="KW-0408">Iron</keyword>
<keyword id="KW-0472">Membrane</keyword>
<keyword id="KW-0479">Metal-binding</keyword>
<keyword id="KW-0503">Monooxygenase</keyword>
<keyword id="KW-0560">Oxidoreductase</keyword>
<keyword id="KW-1185">Reference proteome</keyword>
<keyword id="KW-0735">Signal-anchor</keyword>
<keyword id="KW-0812">Transmembrane</keyword>
<keyword id="KW-1133">Transmembrane helix</keyword>
<organism>
    <name type="scientific">Oryza sativa subsp. japonica</name>
    <name type="common">Rice</name>
    <dbReference type="NCBI Taxonomy" id="39947"/>
    <lineage>
        <taxon>Eukaryota</taxon>
        <taxon>Viridiplantae</taxon>
        <taxon>Streptophyta</taxon>
        <taxon>Embryophyta</taxon>
        <taxon>Tracheophyta</taxon>
        <taxon>Spermatophyta</taxon>
        <taxon>Magnoliopsida</taxon>
        <taxon>Liliopsida</taxon>
        <taxon>Poales</taxon>
        <taxon>Poaceae</taxon>
        <taxon>BOP clade</taxon>
        <taxon>Oryzoideae</taxon>
        <taxon>Oryzeae</taxon>
        <taxon>Oryzinae</taxon>
        <taxon>Oryza</taxon>
        <taxon>Oryza sativa</taxon>
    </lineage>
</organism>
<reference key="1">
    <citation type="journal article" date="2005" name="BMC Biol.">
        <title>The sequence of rice chromosomes 11 and 12, rich in disease resistance genes and recent gene duplications.</title>
        <authorList>
            <consortium name="The rice chromosomes 11 and 12 sequencing consortia"/>
        </authorList>
    </citation>
    <scope>NUCLEOTIDE SEQUENCE [LARGE SCALE GENOMIC DNA]</scope>
    <source>
        <strain>cv. Nipponbare</strain>
    </source>
</reference>
<reference key="2">
    <citation type="journal article" date="2005" name="Nature">
        <title>The map-based sequence of the rice genome.</title>
        <authorList>
            <consortium name="International rice genome sequencing project (IRGSP)"/>
        </authorList>
    </citation>
    <scope>NUCLEOTIDE SEQUENCE [LARGE SCALE GENOMIC DNA]</scope>
    <source>
        <strain>cv. Nipponbare</strain>
    </source>
</reference>
<reference key="3">
    <citation type="journal article" date="2008" name="Nucleic Acids Res.">
        <title>The rice annotation project database (RAP-DB): 2008 update.</title>
        <authorList>
            <consortium name="The rice annotation project (RAP)"/>
        </authorList>
    </citation>
    <scope>GENOME REANNOTATION</scope>
    <source>
        <strain>cv. Nipponbare</strain>
    </source>
</reference>
<reference key="4">
    <citation type="journal article" date="2013" name="Rice">
        <title>Improvement of the Oryza sativa Nipponbare reference genome using next generation sequence and optical map data.</title>
        <authorList>
            <person name="Kawahara Y."/>
            <person name="de la Bastide M."/>
            <person name="Hamilton J.P."/>
            <person name="Kanamori H."/>
            <person name="McCombie W.R."/>
            <person name="Ouyang S."/>
            <person name="Schwartz D.C."/>
            <person name="Tanaka T."/>
            <person name="Wu J."/>
            <person name="Zhou S."/>
            <person name="Childs K.L."/>
            <person name="Davidson R.M."/>
            <person name="Lin H."/>
            <person name="Quesada-Ocampo L."/>
            <person name="Vaillancourt B."/>
            <person name="Sakai H."/>
            <person name="Lee S.S."/>
            <person name="Kim J."/>
            <person name="Numa H."/>
            <person name="Itoh T."/>
            <person name="Buell C.R."/>
            <person name="Matsumoto T."/>
        </authorList>
    </citation>
    <scope>GENOME REANNOTATION</scope>
    <source>
        <strain>cv. Nipponbare</strain>
    </source>
</reference>
<reference key="5">
    <citation type="journal article" date="2005" name="PLoS Biol.">
        <title>The genomes of Oryza sativa: a history of duplications.</title>
        <authorList>
            <person name="Yu J."/>
            <person name="Wang J."/>
            <person name="Lin W."/>
            <person name="Li S."/>
            <person name="Li H."/>
            <person name="Zhou J."/>
            <person name="Ni P."/>
            <person name="Dong W."/>
            <person name="Hu S."/>
            <person name="Zeng C."/>
            <person name="Zhang J."/>
            <person name="Zhang Y."/>
            <person name="Li R."/>
            <person name="Xu Z."/>
            <person name="Li S."/>
            <person name="Li X."/>
            <person name="Zheng H."/>
            <person name="Cong L."/>
            <person name="Lin L."/>
            <person name="Yin J."/>
            <person name="Geng J."/>
            <person name="Li G."/>
            <person name="Shi J."/>
            <person name="Liu J."/>
            <person name="Lv H."/>
            <person name="Li J."/>
            <person name="Wang J."/>
            <person name="Deng Y."/>
            <person name="Ran L."/>
            <person name="Shi X."/>
            <person name="Wang X."/>
            <person name="Wu Q."/>
            <person name="Li C."/>
            <person name="Ren X."/>
            <person name="Wang J."/>
            <person name="Wang X."/>
            <person name="Li D."/>
            <person name="Liu D."/>
            <person name="Zhang X."/>
            <person name="Ji Z."/>
            <person name="Zhao W."/>
            <person name="Sun Y."/>
            <person name="Zhang Z."/>
            <person name="Bao J."/>
            <person name="Han Y."/>
            <person name="Dong L."/>
            <person name="Ji J."/>
            <person name="Chen P."/>
            <person name="Wu S."/>
            <person name="Liu J."/>
            <person name="Xiao Y."/>
            <person name="Bu D."/>
            <person name="Tan J."/>
            <person name="Yang L."/>
            <person name="Ye C."/>
            <person name="Zhang J."/>
            <person name="Xu J."/>
            <person name="Zhou Y."/>
            <person name="Yu Y."/>
            <person name="Zhang B."/>
            <person name="Zhuang S."/>
            <person name="Wei H."/>
            <person name="Liu B."/>
            <person name="Lei M."/>
            <person name="Yu H."/>
            <person name="Li Y."/>
            <person name="Xu H."/>
            <person name="Wei S."/>
            <person name="He X."/>
            <person name="Fang L."/>
            <person name="Zhang Z."/>
            <person name="Zhang Y."/>
            <person name="Huang X."/>
            <person name="Su Z."/>
            <person name="Tong W."/>
            <person name="Li J."/>
            <person name="Tong Z."/>
            <person name="Li S."/>
            <person name="Ye J."/>
            <person name="Wang L."/>
            <person name="Fang L."/>
            <person name="Lei T."/>
            <person name="Chen C.-S."/>
            <person name="Chen H.-C."/>
            <person name="Xu Z."/>
            <person name="Li H."/>
            <person name="Huang H."/>
            <person name="Zhang F."/>
            <person name="Xu H."/>
            <person name="Li N."/>
            <person name="Zhao C."/>
            <person name="Li S."/>
            <person name="Dong L."/>
            <person name="Huang Y."/>
            <person name="Li L."/>
            <person name="Xi Y."/>
            <person name="Qi Q."/>
            <person name="Li W."/>
            <person name="Zhang B."/>
            <person name="Hu W."/>
            <person name="Zhang Y."/>
            <person name="Tian X."/>
            <person name="Jiao Y."/>
            <person name="Liang X."/>
            <person name="Jin J."/>
            <person name="Gao L."/>
            <person name="Zheng W."/>
            <person name="Hao B."/>
            <person name="Liu S.-M."/>
            <person name="Wang W."/>
            <person name="Yuan L."/>
            <person name="Cao M."/>
            <person name="McDermott J."/>
            <person name="Samudrala R."/>
            <person name="Wang J."/>
            <person name="Wong G.K.-S."/>
            <person name="Yang H."/>
        </authorList>
    </citation>
    <scope>NUCLEOTIDE SEQUENCE [LARGE SCALE GENOMIC DNA]</scope>
    <source>
        <strain>cv. Nipponbare</strain>
    </source>
</reference>
<reference key="6">
    <citation type="journal article" date="2003" name="Science">
        <title>Collection, mapping, and annotation of over 28,000 cDNA clones from japonica rice.</title>
        <authorList>
            <consortium name="The rice full-length cDNA consortium"/>
        </authorList>
    </citation>
    <scope>NUCLEOTIDE SEQUENCE [LARGE SCALE MRNA] OF 198-503</scope>
    <source>
        <strain>cv. Nipponbare</strain>
    </source>
</reference>
<reference key="7">
    <citation type="journal article" date="2009" name="Hum. Genomics">
        <title>The cytochrome p450 homepage.</title>
        <authorList>
            <person name="Nelson D.R."/>
        </authorList>
    </citation>
    <scope>IDENTIFICATION</scope>
</reference>
<reference key="8">
    <citation type="journal article" date="2013" name="Proc. Natl. Acad. Sci. U.S.A.">
        <title>CYP714B1 and CYP714B2 encode gibberellin 13-oxidases that reduce gibberellin activity in rice.</title>
        <authorList>
            <person name="Magome H."/>
            <person name="Nomura T."/>
            <person name="Hanada A."/>
            <person name="Takeda-Kamiya N."/>
            <person name="Ohnishi T."/>
            <person name="Shinma Y."/>
            <person name="Katsumata T."/>
            <person name="Kawaide H."/>
            <person name="Kamiya Y."/>
            <person name="Yamaguchi S."/>
        </authorList>
    </citation>
    <scope>FUNCTION</scope>
</reference>
<dbReference type="EC" id="1.14.-.-"/>
<dbReference type="EMBL" id="DP000011">
    <property type="protein sequence ID" value="ABA95659.1"/>
    <property type="status" value="ALT_SEQ"/>
    <property type="molecule type" value="Genomic_DNA"/>
</dbReference>
<dbReference type="EMBL" id="AP008218">
    <property type="protein sequence ID" value="BAF29029.1"/>
    <property type="status" value="ALT_SEQ"/>
    <property type="molecule type" value="Genomic_DNA"/>
</dbReference>
<dbReference type="EMBL" id="AP014968">
    <property type="status" value="NOT_ANNOTATED_CDS"/>
    <property type="molecule type" value="Genomic_DNA"/>
</dbReference>
<dbReference type="EMBL" id="CM000149">
    <property type="protein sequence ID" value="EEE52656.1"/>
    <property type="molecule type" value="Genomic_DNA"/>
</dbReference>
<dbReference type="EMBL" id="AK062692">
    <property type="protein sequence ID" value="BAG88413.1"/>
    <property type="status" value="ALT_INIT"/>
    <property type="molecule type" value="mRNA"/>
</dbReference>
<dbReference type="RefSeq" id="XP_015619748.1">
    <property type="nucleotide sequence ID" value="XM_015764262.1"/>
</dbReference>
<dbReference type="SMR" id="B9GBJ9"/>
<dbReference type="FunCoup" id="B9GBJ9">
    <property type="interactions" value="182"/>
</dbReference>
<dbReference type="STRING" id="39947.B9GBJ9"/>
<dbReference type="PaxDb" id="39947-B9GBJ9"/>
<dbReference type="KEGG" id="dosa:Os12g0118900"/>
<dbReference type="eggNOG" id="KOG0157">
    <property type="taxonomic scope" value="Eukaryota"/>
</dbReference>
<dbReference type="HOGENOM" id="CLU_001570_5_0_1"/>
<dbReference type="InParanoid" id="B9GBJ9"/>
<dbReference type="OrthoDB" id="1470350at2759"/>
<dbReference type="Proteomes" id="UP000000763">
    <property type="component" value="Chromosome 12"/>
</dbReference>
<dbReference type="Proteomes" id="UP000007752">
    <property type="component" value="Chromosome 12"/>
</dbReference>
<dbReference type="Proteomes" id="UP000059680">
    <property type="component" value="Chromosome 12"/>
</dbReference>
<dbReference type="GO" id="GO:0016020">
    <property type="term" value="C:membrane"/>
    <property type="evidence" value="ECO:0007669"/>
    <property type="project" value="UniProtKB-SubCell"/>
</dbReference>
<dbReference type="GO" id="GO:0020037">
    <property type="term" value="F:heme binding"/>
    <property type="evidence" value="ECO:0007669"/>
    <property type="project" value="InterPro"/>
</dbReference>
<dbReference type="GO" id="GO:0005506">
    <property type="term" value="F:iron ion binding"/>
    <property type="evidence" value="ECO:0007669"/>
    <property type="project" value="InterPro"/>
</dbReference>
<dbReference type="GO" id="GO:0004497">
    <property type="term" value="F:monooxygenase activity"/>
    <property type="evidence" value="ECO:0000318"/>
    <property type="project" value="GO_Central"/>
</dbReference>
<dbReference type="GO" id="GO:0016705">
    <property type="term" value="F:oxidoreductase activity, acting on paired donors, with incorporation or reduction of molecular oxygen"/>
    <property type="evidence" value="ECO:0007669"/>
    <property type="project" value="InterPro"/>
</dbReference>
<dbReference type="GO" id="GO:0006629">
    <property type="term" value="P:lipid metabolic process"/>
    <property type="evidence" value="ECO:0007669"/>
    <property type="project" value="UniProtKB-ARBA"/>
</dbReference>
<dbReference type="CDD" id="cd20640">
    <property type="entry name" value="CYP714"/>
    <property type="match status" value="1"/>
</dbReference>
<dbReference type="Gene3D" id="1.10.630.10">
    <property type="entry name" value="Cytochrome P450"/>
    <property type="match status" value="1"/>
</dbReference>
<dbReference type="InterPro" id="IPR001128">
    <property type="entry name" value="Cyt_P450"/>
</dbReference>
<dbReference type="InterPro" id="IPR017972">
    <property type="entry name" value="Cyt_P450_CS"/>
</dbReference>
<dbReference type="InterPro" id="IPR002401">
    <property type="entry name" value="Cyt_P450_E_grp-I"/>
</dbReference>
<dbReference type="InterPro" id="IPR036396">
    <property type="entry name" value="Cyt_P450_sf"/>
</dbReference>
<dbReference type="InterPro" id="IPR050665">
    <property type="entry name" value="Cytochrome_P450_Monooxygen"/>
</dbReference>
<dbReference type="PANTHER" id="PTHR24282:SF141">
    <property type="entry name" value="CYTOCHROME P450 714C3"/>
    <property type="match status" value="1"/>
</dbReference>
<dbReference type="PANTHER" id="PTHR24282">
    <property type="entry name" value="CYTOCHROME P450 FAMILY MEMBER"/>
    <property type="match status" value="1"/>
</dbReference>
<dbReference type="Pfam" id="PF00067">
    <property type="entry name" value="p450"/>
    <property type="match status" value="1"/>
</dbReference>
<dbReference type="PRINTS" id="PR00463">
    <property type="entry name" value="EP450I"/>
</dbReference>
<dbReference type="PRINTS" id="PR00385">
    <property type="entry name" value="P450"/>
</dbReference>
<dbReference type="SUPFAM" id="SSF48264">
    <property type="entry name" value="Cytochrome P450"/>
    <property type="match status" value="1"/>
</dbReference>
<dbReference type="PROSITE" id="PS00086">
    <property type="entry name" value="CYTOCHROME_P450"/>
    <property type="match status" value="1"/>
</dbReference>
<name>C14C1_ORYSJ</name>
<proteinExistence type="evidence at transcript level"/>
<gene>
    <name type="primary">CYP714C1</name>
    <name type="ordered locus">Os12g0118900</name>
    <name type="ordered locus">LOC_Os12g02630</name>
    <name type="ORF">OsJ_35024</name>
</gene>
<comment type="function">
    <text evidence="3">Probably not involved in gibberellin metabolism since over-expression of CYP714C1 in a heterologous system does not induce semi-dwarfism.</text>
</comment>
<comment type="cofactor">
    <cofactor evidence="1">
        <name>heme</name>
        <dbReference type="ChEBI" id="CHEBI:30413"/>
    </cofactor>
</comment>
<comment type="subcellular location">
    <subcellularLocation>
        <location evidence="4">Membrane</location>
        <topology evidence="4">Single-pass type III membrane protein</topology>
    </subcellularLocation>
</comment>
<comment type="similarity">
    <text evidence="4">Belongs to the cytochrome P450 family.</text>
</comment>
<comment type="sequence caution" evidence="4">
    <conflict type="erroneous gene model prediction">
        <sequence resource="EMBL-CDS" id="ABA95659"/>
    </conflict>
</comment>
<comment type="sequence caution" evidence="4">
    <conflict type="erroneous gene model prediction">
        <sequence resource="EMBL-CDS" id="BAF29029"/>
    </conflict>
</comment>
<comment type="sequence caution" evidence="4">
    <conflict type="erroneous initiation">
        <sequence resource="EMBL-CDS" id="BAG88413"/>
    </conflict>
    <text>Truncated N-terminus.</text>
</comment>
<sequence>MEKLLALIVVLVILLSLALFYLCNILWLRAVKIRKKLRRQGIRGPKPTFLYGNTKEIKRIRQELKFSQKQGTNNFISTLFPHFLLCRETYGPVFLYSTGALEILQVSHPDMVKDIGRWTPSELGKPNYLKKSRKALFGGGLFTENGDEWAYQRKIIAPEFFMDKIKGMIQLIEDATVTVLEAWEDMIDDVGGCREIVVDDYLRNLSADVIARACFGSSFTKGEEIFCKLRQLQKVIAQQDSFVGLSALWKYLPTKSNQEIQMLDEQVRLLILDVAKEQHHYQDSHNSLVNAIIDGAQDGRSAAEAEDFIVGNCKTIYFGGHESTAVTAIWCLMLLATHSEAMEVCRGRSTLDVDALRRLKIVTMVIQETLRLYPPASVMMQEALTDVKLGNIEVPRGTIVQVPRLMLHLDKEAWGADADEFRPDRFANGVAAACRAAHMYVPFGHGPRTCIGQNLAMAELKVVLARLLTKFAFSPSPRYRHSPAFRLTIEPGFGLPLMVTKLP</sequence>